<evidence type="ECO:0000250" key="1"/>
<evidence type="ECO:0000255" key="2"/>
<evidence type="ECO:0000305" key="3"/>
<keyword id="KW-0119">Carbohydrate metabolism</keyword>
<keyword id="KW-0325">Glycoprotein</keyword>
<keyword id="KW-0326">Glycosidase</keyword>
<keyword id="KW-0378">Hydrolase</keyword>
<keyword id="KW-0624">Polysaccharide degradation</keyword>
<keyword id="KW-1185">Reference proteome</keyword>
<keyword id="KW-0964">Secreted</keyword>
<keyword id="KW-0732">Signal</keyword>
<dbReference type="EC" id="3.2.1.25"/>
<dbReference type="EMBL" id="AACD01000027">
    <property type="protein sequence ID" value="EAA64028.1"/>
    <property type="molecule type" value="Genomic_DNA"/>
</dbReference>
<dbReference type="EMBL" id="BN001307">
    <property type="protein sequence ID" value="CBF85479.1"/>
    <property type="molecule type" value="Genomic_DNA"/>
</dbReference>
<dbReference type="RefSeq" id="XP_659346.1">
    <property type="nucleotide sequence ID" value="XM_654254.1"/>
</dbReference>
<dbReference type="SMR" id="Q5BCI8"/>
<dbReference type="STRING" id="227321.Q5BCI8"/>
<dbReference type="CAZy" id="GH2">
    <property type="family name" value="Glycoside Hydrolase Family 2"/>
</dbReference>
<dbReference type="GlyCosmos" id="Q5BCI8">
    <property type="glycosylation" value="14 sites, No reported glycans"/>
</dbReference>
<dbReference type="EnsemblFungi" id="CBF85479">
    <property type="protein sequence ID" value="CBF85479"/>
    <property type="gene ID" value="ANIA_01742"/>
</dbReference>
<dbReference type="KEGG" id="ani:ANIA_01742"/>
<dbReference type="eggNOG" id="KOG2230">
    <property type="taxonomic scope" value="Eukaryota"/>
</dbReference>
<dbReference type="HOGENOM" id="CLU_005015_3_0_1"/>
<dbReference type="InParanoid" id="Q5BCI8"/>
<dbReference type="OMA" id="PWKPAYI"/>
<dbReference type="OrthoDB" id="2866996at2759"/>
<dbReference type="UniPathway" id="UPA00280"/>
<dbReference type="Proteomes" id="UP000000560">
    <property type="component" value="Chromosome VII"/>
</dbReference>
<dbReference type="GO" id="GO:0005576">
    <property type="term" value="C:extracellular region"/>
    <property type="evidence" value="ECO:0007669"/>
    <property type="project" value="UniProtKB-SubCell"/>
</dbReference>
<dbReference type="GO" id="GO:0004567">
    <property type="term" value="F:beta-mannosidase activity"/>
    <property type="evidence" value="ECO:0000318"/>
    <property type="project" value="GO_Central"/>
</dbReference>
<dbReference type="GO" id="GO:0006516">
    <property type="term" value="P:glycoprotein catabolic process"/>
    <property type="evidence" value="ECO:0000318"/>
    <property type="project" value="GO_Central"/>
</dbReference>
<dbReference type="GO" id="GO:0000272">
    <property type="term" value="P:polysaccharide catabolic process"/>
    <property type="evidence" value="ECO:0007669"/>
    <property type="project" value="UniProtKB-KW"/>
</dbReference>
<dbReference type="FunFam" id="2.60.120.260:FF:000200">
    <property type="entry name" value="Beta-mannosidase A"/>
    <property type="match status" value="1"/>
</dbReference>
<dbReference type="FunFam" id="2.60.40.10:FF:001511">
    <property type="entry name" value="Beta-mannosidase A"/>
    <property type="match status" value="1"/>
</dbReference>
<dbReference type="FunFam" id="2.60.40.10:FF:002310">
    <property type="entry name" value="Beta-mannosidase A"/>
    <property type="match status" value="1"/>
</dbReference>
<dbReference type="FunFam" id="3.20.20.80:FF:000084">
    <property type="entry name" value="Beta-mannosidase A"/>
    <property type="match status" value="1"/>
</dbReference>
<dbReference type="Gene3D" id="2.60.120.260">
    <property type="entry name" value="Galactose-binding domain-like"/>
    <property type="match status" value="1"/>
</dbReference>
<dbReference type="Gene3D" id="3.20.20.80">
    <property type="entry name" value="Glycosidases"/>
    <property type="match status" value="1"/>
</dbReference>
<dbReference type="Gene3D" id="2.60.40.10">
    <property type="entry name" value="Immunoglobulins"/>
    <property type="match status" value="3"/>
</dbReference>
<dbReference type="InterPro" id="IPR036156">
    <property type="entry name" value="Beta-gal/glucu_dom_sf"/>
</dbReference>
<dbReference type="InterPro" id="IPR054593">
    <property type="entry name" value="Beta-mannosidase-like_N2"/>
</dbReference>
<dbReference type="InterPro" id="IPR050887">
    <property type="entry name" value="Beta-mannosidase_GH2"/>
</dbReference>
<dbReference type="InterPro" id="IPR041625">
    <property type="entry name" value="Beta-mannosidase_Ig"/>
</dbReference>
<dbReference type="InterPro" id="IPR008979">
    <property type="entry name" value="Galactose-bd-like_sf"/>
</dbReference>
<dbReference type="InterPro" id="IPR006102">
    <property type="entry name" value="Glyco_hydro_2_Ig-like"/>
</dbReference>
<dbReference type="InterPro" id="IPR017853">
    <property type="entry name" value="Glycoside_hydrolase_SF"/>
</dbReference>
<dbReference type="InterPro" id="IPR013783">
    <property type="entry name" value="Ig-like_fold"/>
</dbReference>
<dbReference type="InterPro" id="IPR041447">
    <property type="entry name" value="Mannosidase_ig"/>
</dbReference>
<dbReference type="PANTHER" id="PTHR43730">
    <property type="entry name" value="BETA-MANNOSIDASE"/>
    <property type="match status" value="1"/>
</dbReference>
<dbReference type="PANTHER" id="PTHR43730:SF5">
    <property type="entry name" value="BETA-MANNOSIDASE A"/>
    <property type="match status" value="1"/>
</dbReference>
<dbReference type="Pfam" id="PF00703">
    <property type="entry name" value="Glyco_hydro_2"/>
    <property type="match status" value="1"/>
</dbReference>
<dbReference type="Pfam" id="PF22666">
    <property type="entry name" value="Glyco_hydro_2_N2"/>
    <property type="match status" value="1"/>
</dbReference>
<dbReference type="Pfam" id="PF17753">
    <property type="entry name" value="Ig_mannosidase"/>
    <property type="match status" value="1"/>
</dbReference>
<dbReference type="Pfam" id="PF17786">
    <property type="entry name" value="Mannosidase_ig"/>
    <property type="match status" value="1"/>
</dbReference>
<dbReference type="SUPFAM" id="SSF51445">
    <property type="entry name" value="(Trans)glycosidases"/>
    <property type="match status" value="1"/>
</dbReference>
<dbReference type="SUPFAM" id="SSF49303">
    <property type="entry name" value="beta-Galactosidase/glucuronidase domain"/>
    <property type="match status" value="1"/>
</dbReference>
<dbReference type="SUPFAM" id="SSF49785">
    <property type="entry name" value="Galactose-binding domain-like"/>
    <property type="match status" value="1"/>
</dbReference>
<gene>
    <name type="primary">mndA</name>
    <name type="ORF">AN1742</name>
</gene>
<protein>
    <recommendedName>
        <fullName>Beta-mannosidase A</fullName>
        <ecNumber>3.2.1.25</ecNumber>
    </recommendedName>
    <alternativeName>
        <fullName>Mannanase A</fullName>
        <shortName>Mannase A</shortName>
    </alternativeName>
</protein>
<reference key="1">
    <citation type="journal article" date="2005" name="Nature">
        <title>Sequencing of Aspergillus nidulans and comparative analysis with A. fumigatus and A. oryzae.</title>
        <authorList>
            <person name="Galagan J.E."/>
            <person name="Calvo S.E."/>
            <person name="Cuomo C."/>
            <person name="Ma L.-J."/>
            <person name="Wortman J.R."/>
            <person name="Batzoglou S."/>
            <person name="Lee S.-I."/>
            <person name="Bastuerkmen M."/>
            <person name="Spevak C.C."/>
            <person name="Clutterbuck J."/>
            <person name="Kapitonov V."/>
            <person name="Jurka J."/>
            <person name="Scazzocchio C."/>
            <person name="Farman M.L."/>
            <person name="Butler J."/>
            <person name="Purcell S."/>
            <person name="Harris S."/>
            <person name="Braus G.H."/>
            <person name="Draht O."/>
            <person name="Busch S."/>
            <person name="D'Enfert C."/>
            <person name="Bouchier C."/>
            <person name="Goldman G.H."/>
            <person name="Bell-Pedersen D."/>
            <person name="Griffiths-Jones S."/>
            <person name="Doonan J.H."/>
            <person name="Yu J."/>
            <person name="Vienken K."/>
            <person name="Pain A."/>
            <person name="Freitag M."/>
            <person name="Selker E.U."/>
            <person name="Archer D.B."/>
            <person name="Penalva M.A."/>
            <person name="Oakley B.R."/>
            <person name="Momany M."/>
            <person name="Tanaka T."/>
            <person name="Kumagai T."/>
            <person name="Asai K."/>
            <person name="Machida M."/>
            <person name="Nierman W.C."/>
            <person name="Denning D.W."/>
            <person name="Caddick M.X."/>
            <person name="Hynes M."/>
            <person name="Paoletti M."/>
            <person name="Fischer R."/>
            <person name="Miller B.L."/>
            <person name="Dyer P.S."/>
            <person name="Sachs M.S."/>
            <person name="Osmani S.A."/>
            <person name="Birren B.W."/>
        </authorList>
    </citation>
    <scope>NUCLEOTIDE SEQUENCE [LARGE SCALE GENOMIC DNA]</scope>
    <source>
        <strain>FGSC A4 / ATCC 38163 / CBS 112.46 / NRRL 194 / M139</strain>
    </source>
</reference>
<reference key="2">
    <citation type="journal article" date="2009" name="Fungal Genet. Biol.">
        <title>The 2008 update of the Aspergillus nidulans genome annotation: a community effort.</title>
        <authorList>
            <person name="Wortman J.R."/>
            <person name="Gilsenan J.M."/>
            <person name="Joardar V."/>
            <person name="Deegan J."/>
            <person name="Clutterbuck J."/>
            <person name="Andersen M.R."/>
            <person name="Archer D."/>
            <person name="Bencina M."/>
            <person name="Braus G."/>
            <person name="Coutinho P."/>
            <person name="von Dohren H."/>
            <person name="Doonan J."/>
            <person name="Driessen A.J."/>
            <person name="Durek P."/>
            <person name="Espeso E."/>
            <person name="Fekete E."/>
            <person name="Flipphi M."/>
            <person name="Estrada C.G."/>
            <person name="Geysens S."/>
            <person name="Goldman G."/>
            <person name="de Groot P.W."/>
            <person name="Hansen K."/>
            <person name="Harris S.D."/>
            <person name="Heinekamp T."/>
            <person name="Helmstaedt K."/>
            <person name="Henrissat B."/>
            <person name="Hofmann G."/>
            <person name="Homan T."/>
            <person name="Horio T."/>
            <person name="Horiuchi H."/>
            <person name="James S."/>
            <person name="Jones M."/>
            <person name="Karaffa L."/>
            <person name="Karanyi Z."/>
            <person name="Kato M."/>
            <person name="Keller N."/>
            <person name="Kelly D.E."/>
            <person name="Kiel J.A."/>
            <person name="Kim J.M."/>
            <person name="van der Klei I.J."/>
            <person name="Klis F.M."/>
            <person name="Kovalchuk A."/>
            <person name="Krasevec N."/>
            <person name="Kubicek C.P."/>
            <person name="Liu B."/>
            <person name="Maccabe A."/>
            <person name="Meyer V."/>
            <person name="Mirabito P."/>
            <person name="Miskei M."/>
            <person name="Mos M."/>
            <person name="Mullins J."/>
            <person name="Nelson D.R."/>
            <person name="Nielsen J."/>
            <person name="Oakley B.R."/>
            <person name="Osmani S.A."/>
            <person name="Pakula T."/>
            <person name="Paszewski A."/>
            <person name="Paulsen I."/>
            <person name="Pilsyk S."/>
            <person name="Pocsi I."/>
            <person name="Punt P.J."/>
            <person name="Ram A.F."/>
            <person name="Ren Q."/>
            <person name="Robellet X."/>
            <person name="Robson G."/>
            <person name="Seiboth B."/>
            <person name="van Solingen P."/>
            <person name="Specht T."/>
            <person name="Sun J."/>
            <person name="Taheri-Talesh N."/>
            <person name="Takeshita N."/>
            <person name="Ussery D."/>
            <person name="vanKuyk P.A."/>
            <person name="Visser H."/>
            <person name="van de Vondervoort P.J."/>
            <person name="de Vries R.P."/>
            <person name="Walton J."/>
            <person name="Xiang X."/>
            <person name="Xiong Y."/>
            <person name="Zeng A.P."/>
            <person name="Brandt B.W."/>
            <person name="Cornell M.J."/>
            <person name="van den Hondel C.A."/>
            <person name="Visser J."/>
            <person name="Oliver S.G."/>
            <person name="Turner G."/>
        </authorList>
    </citation>
    <scope>GENOME REANNOTATION</scope>
    <source>
        <strain>FGSC A4 / ATCC 38163 / CBS 112.46 / NRRL 194 / M139</strain>
    </source>
</reference>
<sequence length="940" mass="105765">MHFHGIATQAVLASNITTGSGRHVSLSDVKWTLSSSALNSTVPASLPSQAHLDLLNAGVIDDPYYGLNEIDLQWIAQANWTYTSDPIPDLLEEYESTWLVFEGLDTFATVTFCGHNIASTNNQFRQYAFDVSSALKECTGGPVVRIDFASAPNTVDAIAADPKTPVWPVQLTAQLPNRWLMRKQQSDFGWDWGPAFAPCGPWKPAYVVQLEKTAPIHVLNTDLDIYRQGNINHLPPDQKQPWVVNASIDFIGRLPAEPRLLIEIKELETGDVLASQISDSVTLIGTSITGVTTLKDASPKLWWPSSLGAQNLYNVTITVFNKTEEVARITKRTGFRTIFLNQRNITATQLSQGIAPGANWHFEVNGKEFYAKGSNFIPPDTFWPRVTKQKMTRLLDAVVAGNQNMLRIWSSGAYLPDFIYDLADERGILLWSEFQFSDSMYPVDEDFLDNVAQEVVYNVRRVNHHPSLALWAGGNEIESLMLPLTREADPDNYPKYLAEYEKLYISLILPLVYENTRSISYSPSSTTEGYLSVNLSAPVPMTERYENDEPGAYYGDTDYYNYDTTVSFDYSIYPVGRFANEFGFHSMPSLQTWQQVADPEDLYFNSTTVVIHNRHYTSEGYGRIENSSRGMAEMTLGVERYYPIPDNPDSVANFSAWCLATQLFQADFYKSQIQFYRRGSGMPERQLGSLYWQLEDIWQGPTWAGIEYDGRWKVLHYVARDVYQPIIVSPFWNYTTGDLEIYVTADLWESAAGTVNLKWLNLSGEQIIDNAGTPTEIPFTVGAINTTKVYSTNIHDLNLPDTRASILTLSLSSQANLPNAAVKTSLTHENHFTPSFPKDLELVNPGLELSYDAHSGIFTVEAKSGVSLYTWLDYPAGLVGYFTENAFLLVPGQKKKVQFVVQDGPKDQDWEWQSEVTVRSLWDQKSSTFLYALRVATGRP</sequence>
<comment type="function">
    <text evidence="1">Exoglycosidase that cleaves the single beta-linked mannose residue from the non-reducing end of beta-mannosidic oligosaccharides of various complexity and length. Involved in the degradation of polymeric mannan and galactomannan (By similarity).</text>
</comment>
<comment type="catalytic activity">
    <reaction>
        <text>Hydrolysis of terminal, non-reducing beta-D-mannose residues in beta-D-mannosides.</text>
        <dbReference type="EC" id="3.2.1.25"/>
    </reaction>
</comment>
<comment type="pathway">
    <text>Glycan metabolism; N-glycan degradation.</text>
</comment>
<comment type="subunit">
    <text evidence="1">Homodimer.</text>
</comment>
<comment type="subcellular location">
    <subcellularLocation>
        <location evidence="1">Secreted</location>
    </subcellularLocation>
</comment>
<comment type="similarity">
    <text evidence="3">Belongs to the glycosyl hydrolase 2 family. Beta-mannosidase A subfamily.</text>
</comment>
<name>MANBA_EMENI</name>
<proteinExistence type="inferred from homology"/>
<organism>
    <name type="scientific">Emericella nidulans (strain FGSC A4 / ATCC 38163 / CBS 112.46 / NRRL 194 / M139)</name>
    <name type="common">Aspergillus nidulans</name>
    <dbReference type="NCBI Taxonomy" id="227321"/>
    <lineage>
        <taxon>Eukaryota</taxon>
        <taxon>Fungi</taxon>
        <taxon>Dikarya</taxon>
        <taxon>Ascomycota</taxon>
        <taxon>Pezizomycotina</taxon>
        <taxon>Eurotiomycetes</taxon>
        <taxon>Eurotiomycetidae</taxon>
        <taxon>Eurotiales</taxon>
        <taxon>Aspergillaceae</taxon>
        <taxon>Aspergillus</taxon>
        <taxon>Aspergillus subgen. Nidulantes</taxon>
    </lineage>
</organism>
<feature type="signal peptide" evidence="2">
    <location>
        <begin position="1"/>
        <end position="21"/>
    </location>
</feature>
<feature type="chain" id="PRO_0000394649" description="Beta-mannosidase A">
    <location>
        <begin position="22"/>
        <end position="940"/>
    </location>
</feature>
<feature type="active site" description="Proton donor" evidence="1">
    <location>
        <position position="476"/>
    </location>
</feature>
<feature type="glycosylation site" description="N-linked (GlcNAc...) asparagine" evidence="2">
    <location>
        <position position="15"/>
    </location>
</feature>
<feature type="glycosylation site" description="N-linked (GlcNAc...) asparagine" evidence="2">
    <location>
        <position position="39"/>
    </location>
</feature>
<feature type="glycosylation site" description="N-linked (GlcNAc...) asparagine" evidence="2">
    <location>
        <position position="79"/>
    </location>
</feature>
<feature type="glycosylation site" description="N-linked (GlcNAc...) asparagine" evidence="2">
    <location>
        <position position="245"/>
    </location>
</feature>
<feature type="glycosylation site" description="N-linked (GlcNAc...) asparagine" evidence="2">
    <location>
        <position position="314"/>
    </location>
</feature>
<feature type="glycosylation site" description="N-linked (GlcNAc...) asparagine" evidence="2">
    <location>
        <position position="321"/>
    </location>
</feature>
<feature type="glycosylation site" description="N-linked (GlcNAc...) asparagine" evidence="2">
    <location>
        <position position="344"/>
    </location>
</feature>
<feature type="glycosylation site" description="N-linked (GlcNAc...) asparagine" evidence="2">
    <location>
        <position position="534"/>
    </location>
</feature>
<feature type="glycosylation site" description="N-linked (GlcNAc...) asparagine" evidence="2">
    <location>
        <position position="605"/>
    </location>
</feature>
<feature type="glycosylation site" description="N-linked (GlcNAc...) asparagine" evidence="2">
    <location>
        <position position="626"/>
    </location>
</feature>
<feature type="glycosylation site" description="N-linked (GlcNAc...) asparagine" evidence="2">
    <location>
        <position position="653"/>
    </location>
</feature>
<feature type="glycosylation site" description="N-linked (GlcNAc...) asparagine" evidence="2">
    <location>
        <position position="733"/>
    </location>
</feature>
<feature type="glycosylation site" description="N-linked (GlcNAc...) asparagine" evidence="2">
    <location>
        <position position="761"/>
    </location>
</feature>
<feature type="glycosylation site" description="N-linked (GlcNAc...) asparagine" evidence="2">
    <location>
        <position position="785"/>
    </location>
</feature>
<accession>Q5BCI8</accession>
<accession>C8VP45</accession>